<feature type="chain" id="PRO_0000059054" description="Thymidine phosphorylase">
    <location>
        <begin position="1"/>
        <end position="440"/>
    </location>
</feature>
<feature type="helix" evidence="4">
    <location>
        <begin position="4"/>
        <end position="12"/>
    </location>
</feature>
<feature type="helix" evidence="4">
    <location>
        <begin position="19"/>
        <end position="30"/>
    </location>
</feature>
<feature type="helix" evidence="4">
    <location>
        <begin position="36"/>
        <end position="49"/>
    </location>
</feature>
<feature type="helix" evidence="4">
    <location>
        <begin position="53"/>
        <end position="64"/>
    </location>
</feature>
<feature type="helix" evidence="4">
    <location>
        <begin position="73"/>
        <end position="75"/>
    </location>
</feature>
<feature type="strand" evidence="4">
    <location>
        <begin position="81"/>
        <end position="86"/>
    </location>
</feature>
<feature type="helix" evidence="4">
    <location>
        <begin position="94"/>
        <end position="104"/>
    </location>
</feature>
<feature type="strand" evidence="4">
    <location>
        <begin position="108"/>
        <end position="112"/>
    </location>
</feature>
<feature type="turn" evidence="2">
    <location>
        <begin position="117"/>
        <end position="119"/>
    </location>
</feature>
<feature type="helix" evidence="4">
    <location>
        <begin position="123"/>
        <end position="127"/>
    </location>
</feature>
<feature type="helix" evidence="4">
    <location>
        <begin position="139"/>
        <end position="149"/>
    </location>
</feature>
<feature type="strand" evidence="4">
    <location>
        <begin position="150"/>
        <end position="154"/>
    </location>
</feature>
<feature type="helix" evidence="4">
    <location>
        <begin position="162"/>
        <end position="171"/>
    </location>
</feature>
<feature type="turn" evidence="4">
    <location>
        <begin position="172"/>
        <end position="175"/>
    </location>
</feature>
<feature type="helix" evidence="4">
    <location>
        <begin position="180"/>
        <end position="192"/>
    </location>
</feature>
<feature type="strand" evidence="4">
    <location>
        <begin position="197"/>
        <end position="206"/>
    </location>
</feature>
<feature type="strand" evidence="4">
    <location>
        <begin position="209"/>
        <end position="213"/>
    </location>
</feature>
<feature type="helix" evidence="4">
    <location>
        <begin position="214"/>
        <end position="230"/>
    </location>
</feature>
<feature type="strand" evidence="4">
    <location>
        <begin position="234"/>
        <end position="241"/>
    </location>
</feature>
<feature type="strand" evidence="4">
    <location>
        <begin position="246"/>
        <end position="248"/>
    </location>
</feature>
<feature type="strand" evidence="4">
    <location>
        <begin position="250"/>
        <end position="252"/>
    </location>
</feature>
<feature type="helix" evidence="4">
    <location>
        <begin position="253"/>
        <end position="263"/>
    </location>
</feature>
<feature type="helix" evidence="4">
    <location>
        <begin position="270"/>
        <end position="286"/>
    </location>
</feature>
<feature type="helix" evidence="4">
    <location>
        <begin position="293"/>
        <end position="305"/>
    </location>
</feature>
<feature type="helix" evidence="4">
    <location>
        <begin position="308"/>
        <end position="319"/>
    </location>
</feature>
<feature type="helix" evidence="4">
    <location>
        <begin position="326"/>
        <end position="333"/>
    </location>
</feature>
<feature type="strand" evidence="4">
    <location>
        <begin position="338"/>
        <end position="343"/>
    </location>
</feature>
<feature type="strand" evidence="4">
    <location>
        <begin position="349"/>
        <end position="354"/>
    </location>
</feature>
<feature type="helix" evidence="4">
    <location>
        <begin position="356"/>
        <end position="365"/>
    </location>
</feature>
<feature type="turn" evidence="4">
    <location>
        <begin position="366"/>
        <end position="368"/>
    </location>
</feature>
<feature type="strand" evidence="3">
    <location>
        <begin position="371"/>
        <end position="375"/>
    </location>
</feature>
<feature type="strand" evidence="4">
    <location>
        <begin position="382"/>
        <end position="385"/>
    </location>
</feature>
<feature type="strand" evidence="4">
    <location>
        <begin position="392"/>
        <end position="394"/>
    </location>
</feature>
<feature type="strand" evidence="4">
    <location>
        <begin position="399"/>
        <end position="406"/>
    </location>
</feature>
<feature type="helix" evidence="4">
    <location>
        <begin position="407"/>
        <end position="420"/>
    </location>
</feature>
<feature type="strand" evidence="4">
    <location>
        <begin position="421"/>
        <end position="426"/>
    </location>
</feature>
<feature type="strand" evidence="4">
    <location>
        <begin position="433"/>
        <end position="438"/>
    </location>
</feature>
<organism>
    <name type="scientific">Escherichia coli (strain K12)</name>
    <dbReference type="NCBI Taxonomy" id="83333"/>
    <lineage>
        <taxon>Bacteria</taxon>
        <taxon>Pseudomonadati</taxon>
        <taxon>Pseudomonadota</taxon>
        <taxon>Gammaproteobacteria</taxon>
        <taxon>Enterobacterales</taxon>
        <taxon>Enterobacteriaceae</taxon>
        <taxon>Escherichia</taxon>
    </lineage>
</organism>
<reference key="1">
    <citation type="journal article" date="1995" name="Nucleic Acids Res.">
        <title>Analysis of the Escherichia coli genome VI: DNA sequence of the region from 92.8 through 100 minutes.</title>
        <authorList>
            <person name="Burland V.D."/>
            <person name="Plunkett G. III"/>
            <person name="Sofia H.J."/>
            <person name="Daniels D.L."/>
            <person name="Blattner F.R."/>
        </authorList>
    </citation>
    <scope>NUCLEOTIDE SEQUENCE [LARGE SCALE GENOMIC DNA]</scope>
    <source>
        <strain>K12 / MG1655 / ATCC 47076</strain>
    </source>
</reference>
<reference key="2">
    <citation type="journal article" date="1997" name="Science">
        <title>The complete genome sequence of Escherichia coli K-12.</title>
        <authorList>
            <person name="Blattner F.R."/>
            <person name="Plunkett G. III"/>
            <person name="Bloch C.A."/>
            <person name="Perna N.T."/>
            <person name="Burland V."/>
            <person name="Riley M."/>
            <person name="Collado-Vides J."/>
            <person name="Glasner J.D."/>
            <person name="Rode C.K."/>
            <person name="Mayhew G.F."/>
            <person name="Gregor J."/>
            <person name="Davis N.W."/>
            <person name="Kirkpatrick H.A."/>
            <person name="Goeden M.A."/>
            <person name="Rose D.J."/>
            <person name="Mau B."/>
            <person name="Shao Y."/>
        </authorList>
    </citation>
    <scope>NUCLEOTIDE SEQUENCE [LARGE SCALE GENOMIC DNA]</scope>
    <source>
        <strain>K12 / MG1655 / ATCC 47076</strain>
    </source>
</reference>
<reference key="3">
    <citation type="journal article" date="2006" name="Mol. Syst. Biol.">
        <title>Highly accurate genome sequences of Escherichia coli K-12 strains MG1655 and W3110.</title>
        <authorList>
            <person name="Hayashi K."/>
            <person name="Morooka N."/>
            <person name="Yamamoto Y."/>
            <person name="Fujita K."/>
            <person name="Isono K."/>
            <person name="Choi S."/>
            <person name="Ohtsubo E."/>
            <person name="Baba T."/>
            <person name="Wanner B.L."/>
            <person name="Mori H."/>
            <person name="Horiuchi T."/>
        </authorList>
    </citation>
    <scope>NUCLEOTIDE SEQUENCE [LARGE SCALE GENOMIC DNA]</scope>
    <source>
        <strain>K12 / W3110 / ATCC 27325 / DSM 5911</strain>
    </source>
</reference>
<reference key="4">
    <citation type="journal article" date="1984" name="Nucleic Acids Res.">
        <title>The internal regulated promoter of the deo operon of Escherichia coli K-12.</title>
        <authorList>
            <person name="Valentin-Hansen P."/>
            <person name="Hammer K."/>
            <person name="Larsen J.E.L."/>
            <person name="Svendsen I."/>
        </authorList>
    </citation>
    <scope>NUCLEOTIDE SEQUENCE [GENOMIC DNA] OF 377-440</scope>
    <source>
        <strain>K12</strain>
    </source>
</reference>
<reference key="5">
    <citation type="journal article" date="1984" name="EMBO J.">
        <title>Structure and function of the intercistronic regulatory deoC-deoA element of Escherichia coli K-12.</title>
        <authorList>
            <person name="Valentin-Hansen P."/>
            <person name="Hammer-Jespersen K."/>
            <person name="Boetius F."/>
            <person name="Svendsen I."/>
        </authorList>
    </citation>
    <scope>NUCLEOTIDE SEQUENCE [GENOMIC DNA] OF 1-18</scope>
</reference>
<reference key="6">
    <citation type="journal article" date="1990" name="J. Biol. Chem.">
        <title>Three-dimensional structure of thymidine phosphorylase from Escherichia coli at 2.8-A resolution.</title>
        <authorList>
            <person name="Walter M.R."/>
            <person name="Cook W.J."/>
            <person name="Cole L.B."/>
            <person name="Short S.A."/>
            <person name="Koszalka G.W."/>
            <person name="Krenitsky T.A."/>
            <person name="Ealick S.E."/>
        </authorList>
    </citation>
    <scope>X-RAY CRYSTALLOGRAPHY (2.8 ANGSTROMS)</scope>
</reference>
<reference key="7">
    <citation type="journal article" date="1998" name="J. Mol. Biol.">
        <title>Structural and theoretical studies suggest domain movement produces an active conformation of thymidine phosphorylase.</title>
        <authorList>
            <person name="Pugmire M.J."/>
            <person name="Cook W.J."/>
            <person name="Jasanoff A."/>
            <person name="Walter M.R."/>
            <person name="Ealick S.E."/>
        </authorList>
    </citation>
    <scope>X-RAY CRYSTALLOGRAPHY (2.8 ANGSTROMS)</scope>
</reference>
<name>TYPH_ECOLI</name>
<protein>
    <recommendedName>
        <fullName>Thymidine phosphorylase</fullName>
        <ecNumber>2.4.2.4</ecNumber>
    </recommendedName>
    <alternativeName>
        <fullName>TdRPase</fullName>
    </alternativeName>
</protein>
<dbReference type="EC" id="2.4.2.4"/>
<dbReference type="EMBL" id="U14003">
    <property type="protein sequence ID" value="AAA97278.1"/>
    <property type="molecule type" value="Genomic_DNA"/>
</dbReference>
<dbReference type="EMBL" id="U00096">
    <property type="protein sequence ID" value="AAC77335.1"/>
    <property type="molecule type" value="Genomic_DNA"/>
</dbReference>
<dbReference type="EMBL" id="AP009048">
    <property type="protein sequence ID" value="BAE78371.1"/>
    <property type="molecule type" value="Genomic_DNA"/>
</dbReference>
<dbReference type="EMBL" id="X00742">
    <property type="protein sequence ID" value="CAA25324.1"/>
    <property type="molecule type" value="Genomic_DNA"/>
</dbReference>
<dbReference type="EMBL" id="X03224">
    <property type="protein sequence ID" value="CAA26975.1"/>
    <property type="molecule type" value="Genomic_DNA"/>
</dbReference>
<dbReference type="PIR" id="S56606">
    <property type="entry name" value="S56606"/>
</dbReference>
<dbReference type="RefSeq" id="NP_418799.1">
    <property type="nucleotide sequence ID" value="NC_000913.3"/>
</dbReference>
<dbReference type="RefSeq" id="WP_000477807.1">
    <property type="nucleotide sequence ID" value="NZ_LN832404.1"/>
</dbReference>
<dbReference type="PDB" id="1AZY">
    <property type="method" value="X-ray"/>
    <property type="resolution" value="3.00 A"/>
    <property type="chains" value="A/B=2-440"/>
</dbReference>
<dbReference type="PDB" id="1OTP">
    <property type="method" value="X-ray"/>
    <property type="resolution" value="2.80 A"/>
    <property type="chains" value="A=2-440"/>
</dbReference>
<dbReference type="PDB" id="1TPT">
    <property type="method" value="X-ray"/>
    <property type="resolution" value="2.80 A"/>
    <property type="chains" value="A=2-440"/>
</dbReference>
<dbReference type="PDB" id="2TPT">
    <property type="method" value="X-ray"/>
    <property type="resolution" value="2.60 A"/>
    <property type="chains" value="A=2-440"/>
</dbReference>
<dbReference type="PDB" id="4EAD">
    <property type="method" value="X-ray"/>
    <property type="resolution" value="1.50 A"/>
    <property type="chains" value="A=2-440"/>
</dbReference>
<dbReference type="PDB" id="4EAF">
    <property type="method" value="X-ray"/>
    <property type="resolution" value="1.55 A"/>
    <property type="chains" value="A=2-440"/>
</dbReference>
<dbReference type="PDB" id="4LHM">
    <property type="method" value="X-ray"/>
    <property type="resolution" value="1.52 A"/>
    <property type="chains" value="A=2-440"/>
</dbReference>
<dbReference type="PDBsum" id="1AZY"/>
<dbReference type="PDBsum" id="1OTP"/>
<dbReference type="PDBsum" id="1TPT"/>
<dbReference type="PDBsum" id="2TPT"/>
<dbReference type="PDBsum" id="4EAD"/>
<dbReference type="PDBsum" id="4EAF"/>
<dbReference type="PDBsum" id="4LHM"/>
<dbReference type="SMR" id="P07650"/>
<dbReference type="BioGRID" id="4262779">
    <property type="interactions" value="22"/>
</dbReference>
<dbReference type="DIP" id="DIP-9426N"/>
<dbReference type="FunCoup" id="P07650">
    <property type="interactions" value="401"/>
</dbReference>
<dbReference type="IntAct" id="P07650">
    <property type="interactions" value="2"/>
</dbReference>
<dbReference type="STRING" id="511145.b4382"/>
<dbReference type="BindingDB" id="P07650"/>
<dbReference type="ChEMBL" id="CHEMBL3726"/>
<dbReference type="DrugBank" id="DB03462">
    <property type="generic name" value="Thymine"/>
</dbReference>
<dbReference type="DrugCentral" id="P07650"/>
<dbReference type="jPOST" id="P07650"/>
<dbReference type="PaxDb" id="511145-b4382"/>
<dbReference type="EnsemblBacteria" id="AAC77335">
    <property type="protein sequence ID" value="AAC77335"/>
    <property type="gene ID" value="b4382"/>
</dbReference>
<dbReference type="GeneID" id="948901"/>
<dbReference type="KEGG" id="ecj:JW4345"/>
<dbReference type="KEGG" id="eco:b4382"/>
<dbReference type="KEGG" id="ecoc:C3026_23680"/>
<dbReference type="PATRIC" id="fig|1411691.4.peg.2303"/>
<dbReference type="EchoBASE" id="EB0215"/>
<dbReference type="eggNOG" id="COG0213">
    <property type="taxonomic scope" value="Bacteria"/>
</dbReference>
<dbReference type="HOGENOM" id="CLU_025040_0_1_6"/>
<dbReference type="InParanoid" id="P07650"/>
<dbReference type="OMA" id="VWGGATN"/>
<dbReference type="OrthoDB" id="9763887at2"/>
<dbReference type="PhylomeDB" id="P07650"/>
<dbReference type="BioCyc" id="EcoCyc:DEOA-MONOMER"/>
<dbReference type="BioCyc" id="MetaCyc:DEOA-MONOMER"/>
<dbReference type="BRENDA" id="2.4.2.4">
    <property type="organism ID" value="2026"/>
</dbReference>
<dbReference type="UniPathway" id="UPA00578">
    <property type="reaction ID" value="UER00638"/>
</dbReference>
<dbReference type="EvolutionaryTrace" id="P07650"/>
<dbReference type="PRO" id="PR:P07650"/>
<dbReference type="Proteomes" id="UP000000625">
    <property type="component" value="Chromosome"/>
</dbReference>
<dbReference type="GO" id="GO:0005829">
    <property type="term" value="C:cytosol"/>
    <property type="evidence" value="ECO:0000314"/>
    <property type="project" value="EcoCyc"/>
</dbReference>
<dbReference type="GO" id="GO:0016020">
    <property type="term" value="C:membrane"/>
    <property type="evidence" value="ECO:0007005"/>
    <property type="project" value="UniProtKB"/>
</dbReference>
<dbReference type="GO" id="GO:0004645">
    <property type="term" value="F:1,4-alpha-oligoglucan phosphorylase activity"/>
    <property type="evidence" value="ECO:0007669"/>
    <property type="project" value="InterPro"/>
</dbReference>
<dbReference type="GO" id="GO:0009032">
    <property type="term" value="F:thymidine phosphorylase activity"/>
    <property type="evidence" value="ECO:0000314"/>
    <property type="project" value="EcoCyc"/>
</dbReference>
<dbReference type="GO" id="GO:0006974">
    <property type="term" value="P:DNA damage response"/>
    <property type="evidence" value="ECO:0000270"/>
    <property type="project" value="EcoliWiki"/>
</dbReference>
<dbReference type="GO" id="GO:0006206">
    <property type="term" value="P:pyrimidine nucleobase metabolic process"/>
    <property type="evidence" value="ECO:0007669"/>
    <property type="project" value="InterPro"/>
</dbReference>
<dbReference type="GO" id="GO:0006213">
    <property type="term" value="P:pyrimidine nucleoside metabolic process"/>
    <property type="evidence" value="ECO:0000250"/>
    <property type="project" value="CAFA"/>
</dbReference>
<dbReference type="GO" id="GO:0046104">
    <property type="term" value="P:thymidine metabolic process"/>
    <property type="evidence" value="ECO:0007669"/>
    <property type="project" value="UniProtKB-UniRule"/>
</dbReference>
<dbReference type="FunFam" id="3.40.1030.10:FF:000001">
    <property type="entry name" value="Thymidine phosphorylase"/>
    <property type="match status" value="1"/>
</dbReference>
<dbReference type="FunFam" id="3.90.1170.30:FF:000001">
    <property type="entry name" value="Thymidine phosphorylase"/>
    <property type="match status" value="1"/>
</dbReference>
<dbReference type="Gene3D" id="3.40.1030.10">
    <property type="entry name" value="Nucleoside phosphorylase/phosphoribosyltransferase catalytic domain"/>
    <property type="match status" value="1"/>
</dbReference>
<dbReference type="Gene3D" id="3.90.1170.30">
    <property type="entry name" value="Pyrimidine nucleoside phosphorylase-like, C-terminal domain"/>
    <property type="match status" value="1"/>
</dbReference>
<dbReference type="Gene3D" id="1.20.970.10">
    <property type="entry name" value="Transferase, Pyrimidine Nucleoside Phosphorylase, Chain C"/>
    <property type="match status" value="1"/>
</dbReference>
<dbReference type="HAMAP" id="MF_01628">
    <property type="entry name" value="Thymid_phosp"/>
    <property type="match status" value="1"/>
</dbReference>
<dbReference type="InterPro" id="IPR000312">
    <property type="entry name" value="Glycosyl_Trfase_fam3"/>
</dbReference>
<dbReference type="InterPro" id="IPR017459">
    <property type="entry name" value="Glycosyl_Trfase_fam3_N_dom"/>
</dbReference>
<dbReference type="InterPro" id="IPR036320">
    <property type="entry name" value="Glycosyl_Trfase_fam3_N_dom_sf"/>
</dbReference>
<dbReference type="InterPro" id="IPR035902">
    <property type="entry name" value="Nuc_phospho_transferase"/>
</dbReference>
<dbReference type="InterPro" id="IPR036566">
    <property type="entry name" value="PYNP-like_C_sf"/>
</dbReference>
<dbReference type="InterPro" id="IPR013102">
    <property type="entry name" value="PYNP_C"/>
</dbReference>
<dbReference type="InterPro" id="IPR018090">
    <property type="entry name" value="Pyrmidine_PPas_bac/euk"/>
</dbReference>
<dbReference type="InterPro" id="IPR017872">
    <property type="entry name" value="Pyrmidine_PPase_CS"/>
</dbReference>
<dbReference type="InterPro" id="IPR000053">
    <property type="entry name" value="Thymidine/pyrmidine_PPase"/>
</dbReference>
<dbReference type="InterPro" id="IPR013465">
    <property type="entry name" value="Thymidine_Pase"/>
</dbReference>
<dbReference type="NCBIfam" id="NF004490">
    <property type="entry name" value="PRK05820.1"/>
    <property type="match status" value="1"/>
</dbReference>
<dbReference type="NCBIfam" id="TIGR02643">
    <property type="entry name" value="T_phosphoryl"/>
    <property type="match status" value="1"/>
</dbReference>
<dbReference type="NCBIfam" id="TIGR02644">
    <property type="entry name" value="Y_phosphoryl"/>
    <property type="match status" value="1"/>
</dbReference>
<dbReference type="PANTHER" id="PTHR10515">
    <property type="entry name" value="THYMIDINE PHOSPHORYLASE"/>
    <property type="match status" value="1"/>
</dbReference>
<dbReference type="PANTHER" id="PTHR10515:SF0">
    <property type="entry name" value="THYMIDINE PHOSPHORYLASE"/>
    <property type="match status" value="1"/>
</dbReference>
<dbReference type="Pfam" id="PF02885">
    <property type="entry name" value="Glycos_trans_3N"/>
    <property type="match status" value="1"/>
</dbReference>
<dbReference type="Pfam" id="PF00591">
    <property type="entry name" value="Glycos_transf_3"/>
    <property type="match status" value="1"/>
</dbReference>
<dbReference type="Pfam" id="PF07831">
    <property type="entry name" value="PYNP_C"/>
    <property type="match status" value="1"/>
</dbReference>
<dbReference type="PIRSF" id="PIRSF000478">
    <property type="entry name" value="TP_PyNP"/>
    <property type="match status" value="1"/>
</dbReference>
<dbReference type="SMART" id="SM00941">
    <property type="entry name" value="PYNP_C"/>
    <property type="match status" value="1"/>
</dbReference>
<dbReference type="SUPFAM" id="SSF52418">
    <property type="entry name" value="Nucleoside phosphorylase/phosphoribosyltransferase catalytic domain"/>
    <property type="match status" value="1"/>
</dbReference>
<dbReference type="SUPFAM" id="SSF47648">
    <property type="entry name" value="Nucleoside phosphorylase/phosphoribosyltransferase N-terminal domain"/>
    <property type="match status" value="1"/>
</dbReference>
<dbReference type="SUPFAM" id="SSF54680">
    <property type="entry name" value="Pyrimidine nucleoside phosphorylase C-terminal domain"/>
    <property type="match status" value="1"/>
</dbReference>
<dbReference type="PROSITE" id="PS00647">
    <property type="entry name" value="THYMID_PHOSPHORYLASE"/>
    <property type="match status" value="1"/>
</dbReference>
<proteinExistence type="evidence at protein level"/>
<accession>P07650</accession>
<accession>Q2M5T5</accession>
<gene>
    <name type="primary">deoA</name>
    <name type="synonym">tpp</name>
    <name type="synonym">ttg</name>
    <name type="ordered locus">b4382</name>
    <name type="ordered locus">JW4345</name>
</gene>
<sequence>MFLAQEIIRKKRDGHALSDEEIRFFINGIRDNTISEGQIAALAMTIFFHDMTMPERVSLTMAMRDSGTVLDWKSLHLNGPIVDKHSTGGVGDVTSLMLGPMVAACGGYIPMISGRGLGHTGGTLDKLESIPGFDIFPDDNRFREIIKDVGVAIIGQTSSLAPADKRFYATRDITATVDSIPLITASILAKKLAEGLDALVMDVKVGSGAFMPTYELSEALAEAIVGVANGAGVRTTALLTDMNQVLASSAGNAVEVREAVQFLTGEYRNPRLFDVTMALCVEMLISGKLAKDDAEARAKLQAVLDNGKAAEVFGRMVAAQKGPTDFVENYAKYLPTAMLTKAVYADTEGFVSEMDTRALGMAVVAMGGGRRQASDTIDYSVGFTDMARLGDQVDGQRPLAVIHAKDENNWQEAAKAVKAAIKLADKAPESTPTVYRRISE</sequence>
<keyword id="KW-0002">3D-structure</keyword>
<keyword id="KW-0328">Glycosyltransferase</keyword>
<keyword id="KW-1185">Reference proteome</keyword>
<keyword id="KW-0808">Transferase</keyword>
<comment type="function">
    <text>The enzymes which catalyze the reversible phosphorolysis of pyrimidine nucleosides are involved in the degradation of these compounds and in their utilization as carbon and energy sources, or in the rescue of pyrimidine bases for nucleotide synthesis.</text>
</comment>
<comment type="catalytic activity">
    <reaction>
        <text>thymidine + phosphate = 2-deoxy-alpha-D-ribose 1-phosphate + thymine</text>
        <dbReference type="Rhea" id="RHEA:16037"/>
        <dbReference type="ChEBI" id="CHEBI:17748"/>
        <dbReference type="ChEBI" id="CHEBI:17821"/>
        <dbReference type="ChEBI" id="CHEBI:43474"/>
        <dbReference type="ChEBI" id="CHEBI:57259"/>
        <dbReference type="EC" id="2.4.2.4"/>
    </reaction>
</comment>
<comment type="pathway">
    <text>Pyrimidine metabolism; dTMP biosynthesis via salvage pathway; dTMP from thymine: step 1/2.</text>
</comment>
<comment type="subunit">
    <text>Homodimer.</text>
</comment>
<comment type="similarity">
    <text evidence="1">Belongs to the thymidine/pyrimidine-nucleoside phosphorylase family.</text>
</comment>
<evidence type="ECO:0000305" key="1"/>
<evidence type="ECO:0007829" key="2">
    <source>
        <dbReference type="PDB" id="1AZY"/>
    </source>
</evidence>
<evidence type="ECO:0007829" key="3">
    <source>
        <dbReference type="PDB" id="1OTP"/>
    </source>
</evidence>
<evidence type="ECO:0007829" key="4">
    <source>
        <dbReference type="PDB" id="4EAD"/>
    </source>
</evidence>